<keyword id="KW-0067">ATP-binding</keyword>
<keyword id="KW-0963">Cytoplasm</keyword>
<keyword id="KW-0275">Fatty acid biosynthesis</keyword>
<keyword id="KW-0276">Fatty acid metabolism</keyword>
<keyword id="KW-0444">Lipid biosynthesis</keyword>
<keyword id="KW-0443">Lipid metabolism</keyword>
<keyword id="KW-0547">Nucleotide-binding</keyword>
<keyword id="KW-1185">Reference proteome</keyword>
<keyword id="KW-0808">Transferase</keyword>
<accession>A5V3X0</accession>
<comment type="function">
    <text evidence="1">Component of the acetyl coenzyme A carboxylase (ACC) complex. First, biotin carboxylase catalyzes the carboxylation of biotin on its carrier protein (BCCP) and then the CO(2) group is transferred by the carboxyltransferase to acetyl-CoA to form malonyl-CoA.</text>
</comment>
<comment type="catalytic activity">
    <reaction evidence="1">
        <text>N(6)-carboxybiotinyl-L-lysyl-[protein] + acetyl-CoA = N(6)-biotinyl-L-lysyl-[protein] + malonyl-CoA</text>
        <dbReference type="Rhea" id="RHEA:54728"/>
        <dbReference type="Rhea" id="RHEA-COMP:10505"/>
        <dbReference type="Rhea" id="RHEA-COMP:10506"/>
        <dbReference type="ChEBI" id="CHEBI:57288"/>
        <dbReference type="ChEBI" id="CHEBI:57384"/>
        <dbReference type="ChEBI" id="CHEBI:83144"/>
        <dbReference type="ChEBI" id="CHEBI:83145"/>
        <dbReference type="EC" id="2.1.3.15"/>
    </reaction>
</comment>
<comment type="pathway">
    <text evidence="1">Lipid metabolism; malonyl-CoA biosynthesis; malonyl-CoA from acetyl-CoA: step 1/1.</text>
</comment>
<comment type="subunit">
    <text evidence="1">Acetyl-CoA carboxylase is a heterohexamer composed of biotin carboxyl carrier protein (AccB), biotin carboxylase (AccC) and two subunits each of ACCase subunit alpha (AccA) and ACCase subunit beta (AccD).</text>
</comment>
<comment type="subcellular location">
    <subcellularLocation>
        <location evidence="1">Cytoplasm</location>
    </subcellularLocation>
</comment>
<comment type="similarity">
    <text evidence="1">Belongs to the AccA family.</text>
</comment>
<dbReference type="EC" id="2.1.3.15" evidence="1"/>
<dbReference type="EMBL" id="CP000699">
    <property type="protein sequence ID" value="ABQ66986.1"/>
    <property type="molecule type" value="Genomic_DNA"/>
</dbReference>
<dbReference type="SMR" id="A5V3X0"/>
<dbReference type="STRING" id="392499.Swit_0618"/>
<dbReference type="PaxDb" id="392499-Swit_0618"/>
<dbReference type="KEGG" id="swi:Swit_0618"/>
<dbReference type="eggNOG" id="COG0825">
    <property type="taxonomic scope" value="Bacteria"/>
</dbReference>
<dbReference type="HOGENOM" id="CLU_015486_0_2_5"/>
<dbReference type="OrthoDB" id="9808023at2"/>
<dbReference type="UniPathway" id="UPA00655">
    <property type="reaction ID" value="UER00711"/>
</dbReference>
<dbReference type="Proteomes" id="UP000001989">
    <property type="component" value="Chromosome"/>
</dbReference>
<dbReference type="GO" id="GO:0009317">
    <property type="term" value="C:acetyl-CoA carboxylase complex"/>
    <property type="evidence" value="ECO:0007669"/>
    <property type="project" value="InterPro"/>
</dbReference>
<dbReference type="GO" id="GO:0003989">
    <property type="term" value="F:acetyl-CoA carboxylase activity"/>
    <property type="evidence" value="ECO:0007669"/>
    <property type="project" value="InterPro"/>
</dbReference>
<dbReference type="GO" id="GO:0005524">
    <property type="term" value="F:ATP binding"/>
    <property type="evidence" value="ECO:0007669"/>
    <property type="project" value="UniProtKB-KW"/>
</dbReference>
<dbReference type="GO" id="GO:0016743">
    <property type="term" value="F:carboxyl- or carbamoyltransferase activity"/>
    <property type="evidence" value="ECO:0007669"/>
    <property type="project" value="UniProtKB-UniRule"/>
</dbReference>
<dbReference type="GO" id="GO:0006633">
    <property type="term" value="P:fatty acid biosynthetic process"/>
    <property type="evidence" value="ECO:0007669"/>
    <property type="project" value="UniProtKB-KW"/>
</dbReference>
<dbReference type="GO" id="GO:2001295">
    <property type="term" value="P:malonyl-CoA biosynthetic process"/>
    <property type="evidence" value="ECO:0007669"/>
    <property type="project" value="UniProtKB-UniRule"/>
</dbReference>
<dbReference type="Gene3D" id="3.90.226.10">
    <property type="entry name" value="2-enoyl-CoA Hydratase, Chain A, domain 1"/>
    <property type="match status" value="1"/>
</dbReference>
<dbReference type="HAMAP" id="MF_00823">
    <property type="entry name" value="AcetylCoA_CT_alpha"/>
    <property type="match status" value="1"/>
</dbReference>
<dbReference type="InterPro" id="IPR001095">
    <property type="entry name" value="Acetyl_CoA_COase_a_su"/>
</dbReference>
<dbReference type="InterPro" id="IPR029045">
    <property type="entry name" value="ClpP/crotonase-like_dom_sf"/>
</dbReference>
<dbReference type="InterPro" id="IPR011763">
    <property type="entry name" value="COA_CT_C"/>
</dbReference>
<dbReference type="NCBIfam" id="TIGR00513">
    <property type="entry name" value="accA"/>
    <property type="match status" value="1"/>
</dbReference>
<dbReference type="NCBIfam" id="NF041504">
    <property type="entry name" value="AccA_sub"/>
    <property type="match status" value="1"/>
</dbReference>
<dbReference type="NCBIfam" id="NF004344">
    <property type="entry name" value="PRK05724.1"/>
    <property type="match status" value="1"/>
</dbReference>
<dbReference type="PANTHER" id="PTHR42853">
    <property type="entry name" value="ACETYL-COENZYME A CARBOXYLASE CARBOXYL TRANSFERASE SUBUNIT ALPHA"/>
    <property type="match status" value="1"/>
</dbReference>
<dbReference type="PANTHER" id="PTHR42853:SF3">
    <property type="entry name" value="ACETYL-COENZYME A CARBOXYLASE CARBOXYL TRANSFERASE SUBUNIT ALPHA, CHLOROPLASTIC"/>
    <property type="match status" value="1"/>
</dbReference>
<dbReference type="Pfam" id="PF03255">
    <property type="entry name" value="ACCA"/>
    <property type="match status" value="1"/>
</dbReference>
<dbReference type="PRINTS" id="PR01069">
    <property type="entry name" value="ACCCTRFRASEA"/>
</dbReference>
<dbReference type="SUPFAM" id="SSF52096">
    <property type="entry name" value="ClpP/crotonase"/>
    <property type="match status" value="1"/>
</dbReference>
<dbReference type="PROSITE" id="PS50989">
    <property type="entry name" value="COA_CT_CTER"/>
    <property type="match status" value="1"/>
</dbReference>
<sequence>MVAYLEFEKPIAELQARIAELRSTADAGSLDLESEASKLEAKSDKLLRDTYAKLTPWQKTQVARHPERPHFKDYVAGFITDFMPLAGDRAFADDQAIIGGLGRLGDRKVMVIGHEKGDDTASRIRHNFGMAKPEGYRKAIRLMELADRFGLPVVSLVDTSGAFPGIQAEERGQAEAIARSTEACLALGVPMVAAVVGEGGSGGAIAVAAANSVLMFEHAVYSVISPEGCASILWRTGDKAAEAAEAMKVTAADLQKLGVVDRVVAEPVGGAHRDPAAAIAALGAAIGEELDKLAGKKPTALRAARRDKFLAIG</sequence>
<protein>
    <recommendedName>
        <fullName evidence="1">Acetyl-coenzyme A carboxylase carboxyl transferase subunit alpha</fullName>
        <shortName evidence="1">ACCase subunit alpha</shortName>
        <shortName evidence="1">Acetyl-CoA carboxylase carboxyltransferase subunit alpha</shortName>
        <ecNumber evidence="1">2.1.3.15</ecNumber>
    </recommendedName>
</protein>
<evidence type="ECO:0000255" key="1">
    <source>
        <dbReference type="HAMAP-Rule" id="MF_00823"/>
    </source>
</evidence>
<evidence type="ECO:0000255" key="2">
    <source>
        <dbReference type="PROSITE-ProRule" id="PRU01137"/>
    </source>
</evidence>
<gene>
    <name evidence="1" type="primary">accA</name>
    <name type="ordered locus">Swit_0618</name>
</gene>
<proteinExistence type="inferred from homology"/>
<name>ACCA_RHIWR</name>
<feature type="chain" id="PRO_1000062676" description="Acetyl-coenzyme A carboxylase carboxyl transferase subunit alpha">
    <location>
        <begin position="1"/>
        <end position="313"/>
    </location>
</feature>
<feature type="domain" description="CoA carboxyltransferase C-terminal" evidence="2">
    <location>
        <begin position="42"/>
        <end position="292"/>
    </location>
</feature>
<organism>
    <name type="scientific">Rhizorhabdus wittichii (strain DSM 6014 / CCUG 31198 / JCM 15750 / NBRC 105917 / EY 4224 / RW1)</name>
    <name type="common">Sphingomonas wittichii</name>
    <dbReference type="NCBI Taxonomy" id="392499"/>
    <lineage>
        <taxon>Bacteria</taxon>
        <taxon>Pseudomonadati</taxon>
        <taxon>Pseudomonadota</taxon>
        <taxon>Alphaproteobacteria</taxon>
        <taxon>Sphingomonadales</taxon>
        <taxon>Sphingomonadaceae</taxon>
        <taxon>Rhizorhabdus</taxon>
    </lineage>
</organism>
<reference key="1">
    <citation type="journal article" date="2010" name="J. Bacteriol.">
        <title>Genome sequence of the dioxin-mineralizing bacterium Sphingomonas wittichii RW1.</title>
        <authorList>
            <person name="Miller T.R."/>
            <person name="Delcher A.L."/>
            <person name="Salzberg S.L."/>
            <person name="Saunders E."/>
            <person name="Detter J.C."/>
            <person name="Halden R.U."/>
        </authorList>
    </citation>
    <scope>NUCLEOTIDE SEQUENCE [LARGE SCALE GENOMIC DNA]</scope>
    <source>
        <strain>DSM 6014 / CCUG 31198 / JCM 15750 / NBRC 105917 / EY 4224 / RW1</strain>
    </source>
</reference>